<accession>C5D679</accession>
<dbReference type="EC" id="6.3.4.5" evidence="1"/>
<dbReference type="EMBL" id="CP001638">
    <property type="protein sequence ID" value="ACS25395.1"/>
    <property type="molecule type" value="Genomic_DNA"/>
</dbReference>
<dbReference type="SMR" id="C5D679"/>
<dbReference type="STRING" id="471223.GWCH70_2703"/>
<dbReference type="KEGG" id="gwc:GWCH70_2703"/>
<dbReference type="eggNOG" id="COG0137">
    <property type="taxonomic scope" value="Bacteria"/>
</dbReference>
<dbReference type="HOGENOM" id="CLU_032784_4_2_9"/>
<dbReference type="OrthoDB" id="9801641at2"/>
<dbReference type="UniPathway" id="UPA00068">
    <property type="reaction ID" value="UER00113"/>
</dbReference>
<dbReference type="GO" id="GO:0005737">
    <property type="term" value="C:cytoplasm"/>
    <property type="evidence" value="ECO:0007669"/>
    <property type="project" value="UniProtKB-SubCell"/>
</dbReference>
<dbReference type="GO" id="GO:0004055">
    <property type="term" value="F:argininosuccinate synthase activity"/>
    <property type="evidence" value="ECO:0007669"/>
    <property type="project" value="UniProtKB-UniRule"/>
</dbReference>
<dbReference type="GO" id="GO:0005524">
    <property type="term" value="F:ATP binding"/>
    <property type="evidence" value="ECO:0007669"/>
    <property type="project" value="UniProtKB-UniRule"/>
</dbReference>
<dbReference type="GO" id="GO:0000053">
    <property type="term" value="P:argininosuccinate metabolic process"/>
    <property type="evidence" value="ECO:0007669"/>
    <property type="project" value="TreeGrafter"/>
</dbReference>
<dbReference type="GO" id="GO:0006526">
    <property type="term" value="P:L-arginine biosynthetic process"/>
    <property type="evidence" value="ECO:0007669"/>
    <property type="project" value="UniProtKB-UniRule"/>
</dbReference>
<dbReference type="GO" id="GO:0000050">
    <property type="term" value="P:urea cycle"/>
    <property type="evidence" value="ECO:0007669"/>
    <property type="project" value="TreeGrafter"/>
</dbReference>
<dbReference type="CDD" id="cd01999">
    <property type="entry name" value="ASS"/>
    <property type="match status" value="1"/>
</dbReference>
<dbReference type="FunFam" id="1.20.5.470:FF:000002">
    <property type="entry name" value="Argininosuccinate synthase"/>
    <property type="match status" value="1"/>
</dbReference>
<dbReference type="FunFam" id="3.40.50.620:FF:000038">
    <property type="entry name" value="Argininosuccinate synthase"/>
    <property type="match status" value="1"/>
</dbReference>
<dbReference type="FunFam" id="3.90.1260.10:FF:000007">
    <property type="entry name" value="Argininosuccinate synthase"/>
    <property type="match status" value="1"/>
</dbReference>
<dbReference type="Gene3D" id="3.90.1260.10">
    <property type="entry name" value="Argininosuccinate synthetase, chain A, domain 2"/>
    <property type="match status" value="1"/>
</dbReference>
<dbReference type="Gene3D" id="3.40.50.620">
    <property type="entry name" value="HUPs"/>
    <property type="match status" value="1"/>
</dbReference>
<dbReference type="Gene3D" id="1.20.5.470">
    <property type="entry name" value="Single helix bin"/>
    <property type="match status" value="1"/>
</dbReference>
<dbReference type="HAMAP" id="MF_00005">
    <property type="entry name" value="Arg_succ_synth_type1"/>
    <property type="match status" value="1"/>
</dbReference>
<dbReference type="InterPro" id="IPR048268">
    <property type="entry name" value="Arginosuc_syn_C"/>
</dbReference>
<dbReference type="InterPro" id="IPR048267">
    <property type="entry name" value="Arginosuc_syn_N"/>
</dbReference>
<dbReference type="InterPro" id="IPR001518">
    <property type="entry name" value="Arginosuc_synth"/>
</dbReference>
<dbReference type="InterPro" id="IPR018223">
    <property type="entry name" value="Arginosuc_synth_CS"/>
</dbReference>
<dbReference type="InterPro" id="IPR023434">
    <property type="entry name" value="Arginosuc_synth_type_1_subfam"/>
</dbReference>
<dbReference type="InterPro" id="IPR024074">
    <property type="entry name" value="AS_cat/multimer_dom_body"/>
</dbReference>
<dbReference type="InterPro" id="IPR014729">
    <property type="entry name" value="Rossmann-like_a/b/a_fold"/>
</dbReference>
<dbReference type="NCBIfam" id="TIGR00032">
    <property type="entry name" value="argG"/>
    <property type="match status" value="1"/>
</dbReference>
<dbReference type="NCBIfam" id="NF001770">
    <property type="entry name" value="PRK00509.1"/>
    <property type="match status" value="1"/>
</dbReference>
<dbReference type="PANTHER" id="PTHR11587">
    <property type="entry name" value="ARGININOSUCCINATE SYNTHASE"/>
    <property type="match status" value="1"/>
</dbReference>
<dbReference type="PANTHER" id="PTHR11587:SF2">
    <property type="entry name" value="ARGININOSUCCINATE SYNTHASE"/>
    <property type="match status" value="1"/>
</dbReference>
<dbReference type="Pfam" id="PF20979">
    <property type="entry name" value="Arginosuc_syn_C"/>
    <property type="match status" value="1"/>
</dbReference>
<dbReference type="Pfam" id="PF00764">
    <property type="entry name" value="Arginosuc_synth"/>
    <property type="match status" value="1"/>
</dbReference>
<dbReference type="SUPFAM" id="SSF52402">
    <property type="entry name" value="Adenine nucleotide alpha hydrolases-like"/>
    <property type="match status" value="1"/>
</dbReference>
<dbReference type="SUPFAM" id="SSF69864">
    <property type="entry name" value="Argininosuccinate synthetase, C-terminal domain"/>
    <property type="match status" value="1"/>
</dbReference>
<dbReference type="PROSITE" id="PS00564">
    <property type="entry name" value="ARGININOSUCCIN_SYN_1"/>
    <property type="match status" value="1"/>
</dbReference>
<dbReference type="PROSITE" id="PS00565">
    <property type="entry name" value="ARGININOSUCCIN_SYN_2"/>
    <property type="match status" value="1"/>
</dbReference>
<keyword id="KW-0028">Amino-acid biosynthesis</keyword>
<keyword id="KW-0055">Arginine biosynthesis</keyword>
<keyword id="KW-0067">ATP-binding</keyword>
<keyword id="KW-0963">Cytoplasm</keyword>
<keyword id="KW-0436">Ligase</keyword>
<keyword id="KW-0547">Nucleotide-binding</keyword>
<gene>
    <name evidence="1" type="primary">argG</name>
    <name type="ordered locus">GWCH70_2703</name>
</gene>
<protein>
    <recommendedName>
        <fullName evidence="1">Argininosuccinate synthase</fullName>
        <ecNumber evidence="1">6.3.4.5</ecNumber>
    </recommendedName>
    <alternativeName>
        <fullName evidence="1">Citrulline--aspartate ligase</fullName>
    </alternativeName>
</protein>
<evidence type="ECO:0000255" key="1">
    <source>
        <dbReference type="HAMAP-Rule" id="MF_00005"/>
    </source>
</evidence>
<reference key="1">
    <citation type="submission" date="2009-06" db="EMBL/GenBank/DDBJ databases">
        <title>Complete sequence of chromosome of Geopacillus sp. WCH70.</title>
        <authorList>
            <consortium name="US DOE Joint Genome Institute"/>
            <person name="Lucas S."/>
            <person name="Copeland A."/>
            <person name="Lapidus A."/>
            <person name="Glavina del Rio T."/>
            <person name="Dalin E."/>
            <person name="Tice H."/>
            <person name="Bruce D."/>
            <person name="Goodwin L."/>
            <person name="Pitluck S."/>
            <person name="Chertkov O."/>
            <person name="Brettin T."/>
            <person name="Detter J.C."/>
            <person name="Han C."/>
            <person name="Larimer F."/>
            <person name="Land M."/>
            <person name="Hauser L."/>
            <person name="Kyrpides N."/>
            <person name="Mikhailova N."/>
            <person name="Brumm P."/>
            <person name="Mead D.A."/>
            <person name="Richardson P."/>
        </authorList>
    </citation>
    <scope>NUCLEOTIDE SEQUENCE [LARGE SCALE GENOMIC DNA]</scope>
    <source>
        <strain>WCH70</strain>
    </source>
</reference>
<feature type="chain" id="PRO_1000201684" description="Argininosuccinate synthase">
    <location>
        <begin position="1"/>
        <end position="402"/>
    </location>
</feature>
<feature type="binding site" evidence="1">
    <location>
        <begin position="9"/>
        <end position="17"/>
    </location>
    <ligand>
        <name>ATP</name>
        <dbReference type="ChEBI" id="CHEBI:30616"/>
    </ligand>
</feature>
<feature type="binding site" evidence="1">
    <location>
        <position position="86"/>
    </location>
    <ligand>
        <name>L-citrulline</name>
        <dbReference type="ChEBI" id="CHEBI:57743"/>
    </ligand>
</feature>
<feature type="binding site" evidence="1">
    <location>
        <position position="116"/>
    </location>
    <ligand>
        <name>ATP</name>
        <dbReference type="ChEBI" id="CHEBI:30616"/>
    </ligand>
</feature>
<feature type="binding site" evidence="1">
    <location>
        <position position="118"/>
    </location>
    <ligand>
        <name>L-aspartate</name>
        <dbReference type="ChEBI" id="CHEBI:29991"/>
    </ligand>
</feature>
<feature type="binding site" evidence="1">
    <location>
        <position position="122"/>
    </location>
    <ligand>
        <name>L-aspartate</name>
        <dbReference type="ChEBI" id="CHEBI:29991"/>
    </ligand>
</feature>
<feature type="binding site" evidence="1">
    <location>
        <position position="122"/>
    </location>
    <ligand>
        <name>L-citrulline</name>
        <dbReference type="ChEBI" id="CHEBI:57743"/>
    </ligand>
</feature>
<feature type="binding site" evidence="1">
    <location>
        <position position="123"/>
    </location>
    <ligand>
        <name>L-aspartate</name>
        <dbReference type="ChEBI" id="CHEBI:29991"/>
    </ligand>
</feature>
<feature type="binding site" evidence="1">
    <location>
        <position position="126"/>
    </location>
    <ligand>
        <name>L-citrulline</name>
        <dbReference type="ChEBI" id="CHEBI:57743"/>
    </ligand>
</feature>
<feature type="binding site" evidence="1">
    <location>
        <position position="174"/>
    </location>
    <ligand>
        <name>L-citrulline</name>
        <dbReference type="ChEBI" id="CHEBI:57743"/>
    </ligand>
</feature>
<feature type="binding site" evidence="1">
    <location>
        <position position="183"/>
    </location>
    <ligand>
        <name>L-citrulline</name>
        <dbReference type="ChEBI" id="CHEBI:57743"/>
    </ligand>
</feature>
<feature type="binding site" evidence="1">
    <location>
        <position position="259"/>
    </location>
    <ligand>
        <name>L-citrulline</name>
        <dbReference type="ChEBI" id="CHEBI:57743"/>
    </ligand>
</feature>
<feature type="binding site" evidence="1">
    <location>
        <position position="271"/>
    </location>
    <ligand>
        <name>L-citrulline</name>
        <dbReference type="ChEBI" id="CHEBI:57743"/>
    </ligand>
</feature>
<name>ASSY_GEOSW</name>
<organism>
    <name type="scientific">Geobacillus sp. (strain WCH70)</name>
    <dbReference type="NCBI Taxonomy" id="471223"/>
    <lineage>
        <taxon>Bacteria</taxon>
        <taxon>Bacillati</taxon>
        <taxon>Bacillota</taxon>
        <taxon>Bacilli</taxon>
        <taxon>Bacillales</taxon>
        <taxon>Anoxybacillaceae</taxon>
        <taxon>Geobacillus</taxon>
    </lineage>
</organism>
<comment type="catalytic activity">
    <reaction evidence="1">
        <text>L-citrulline + L-aspartate + ATP = 2-(N(omega)-L-arginino)succinate + AMP + diphosphate + H(+)</text>
        <dbReference type="Rhea" id="RHEA:10932"/>
        <dbReference type="ChEBI" id="CHEBI:15378"/>
        <dbReference type="ChEBI" id="CHEBI:29991"/>
        <dbReference type="ChEBI" id="CHEBI:30616"/>
        <dbReference type="ChEBI" id="CHEBI:33019"/>
        <dbReference type="ChEBI" id="CHEBI:57472"/>
        <dbReference type="ChEBI" id="CHEBI:57743"/>
        <dbReference type="ChEBI" id="CHEBI:456215"/>
        <dbReference type="EC" id="6.3.4.5"/>
    </reaction>
</comment>
<comment type="pathway">
    <text evidence="1">Amino-acid biosynthesis; L-arginine biosynthesis; L-arginine from L-ornithine and carbamoyl phosphate: step 2/3.</text>
</comment>
<comment type="subunit">
    <text evidence="1">Homotetramer.</text>
</comment>
<comment type="subcellular location">
    <subcellularLocation>
        <location evidence="1">Cytoplasm</location>
    </subcellularLocation>
</comment>
<comment type="similarity">
    <text evidence="1">Belongs to the argininosuccinate synthase family. Type 1 subfamily.</text>
</comment>
<proteinExistence type="inferred from homology"/>
<sequence>MTNPKLVLAYSGGLDTSVAIKWLQERGYDVIACCLDLGEGKDLDFVKEKALKVGAIKSYVIDVKEEFADEYALIALQAHALYEGKYPLVSALSRPLIAKKLVEIAELEGAVAVAHGCTGKGNDQVRFEVSIKALNPNLEVIAPVREWSWSREEEIEYAKKHGIPIPVDLDSPFSIDQNLWGRSNECGILEDPWAAPPEEAYELTAALENTPDVPEIIEIGFEQGVPKTLNGKPYSLASLILELNAIAGKHGVGRIDHVENRLVGIKSREVYECPGAMTLIKAHKELEDLTLVKEVAHFKPIIEQKLAEVIYNGLWFSPIKDALVAFLKETQKNVTGVVRVKLFKGHAIIEGRKSEFSLYDEKLATYTADDQFDHQAAVGFISLYGLPTKVYSIVNNQKKVNV</sequence>